<reference key="1">
    <citation type="journal article" date="1998" name="Nature">
        <title>The complete genome of the hyperthermophilic bacterium Aquifex aeolicus.</title>
        <authorList>
            <person name="Deckert G."/>
            <person name="Warren P.V."/>
            <person name="Gaasterland T."/>
            <person name="Young W.G."/>
            <person name="Lenox A.L."/>
            <person name="Graham D.E."/>
            <person name="Overbeek R."/>
            <person name="Snead M.A."/>
            <person name="Keller M."/>
            <person name="Aujay M."/>
            <person name="Huber R."/>
            <person name="Feldman R.A."/>
            <person name="Short J.M."/>
            <person name="Olsen G.J."/>
            <person name="Swanson R.V."/>
        </authorList>
    </citation>
    <scope>NUCLEOTIDE SEQUENCE [LARGE SCALE GENOMIC DNA]</scope>
    <source>
        <strain>VF5</strain>
    </source>
</reference>
<reference key="2">
    <citation type="submission" date="2008-01" db="PDB data bank">
        <title>Crystal structure of gidA from Aquifex aeolicus.</title>
        <authorList>
            <consortium name="RIKEN structural genomics initiative (RSGI)"/>
        </authorList>
    </citation>
    <scope>X-RAY CRYSTALLOGRAPHY (2.9 ANGSTROMS) IN COMPLEX WITH FAD</scope>
    <scope>SUBUNIT</scope>
</reference>
<evidence type="ECO:0000250" key="1"/>
<evidence type="ECO:0000255" key="2"/>
<evidence type="ECO:0000269" key="3">
    <source ref="2"/>
</evidence>
<evidence type="ECO:0000305" key="4"/>
<evidence type="ECO:0007829" key="5">
    <source>
        <dbReference type="PDB" id="2ZXH"/>
    </source>
</evidence>
<evidence type="ECO:0007829" key="6">
    <source>
        <dbReference type="PDB" id="2ZXI"/>
    </source>
</evidence>
<name>MNMG_AQUAE</name>
<comment type="function">
    <text evidence="1">NAD-binding protein involved in the addition of a carboxymethylaminomethyl (cmnm) group at the wobble position (U34) of certain tRNAs, forming tRNA-cmnm(5)s(2)U34.</text>
</comment>
<comment type="cofactor">
    <cofactor>
        <name>FAD</name>
        <dbReference type="ChEBI" id="CHEBI:57692"/>
    </cofactor>
</comment>
<comment type="subunit">
    <text evidence="1">Homodimer. Heterotetramer of two MnmE and two MnmG subunits (By similarity).</text>
</comment>
<comment type="subcellular location">
    <subcellularLocation>
        <location evidence="1">Cytoplasm</location>
    </subcellularLocation>
</comment>
<comment type="similarity">
    <text evidence="4">Belongs to the MnmG family.</text>
</comment>
<proteinExistence type="evidence at protein level"/>
<organism>
    <name type="scientific">Aquifex aeolicus (strain VF5)</name>
    <dbReference type="NCBI Taxonomy" id="224324"/>
    <lineage>
        <taxon>Bacteria</taxon>
        <taxon>Pseudomonadati</taxon>
        <taxon>Aquificota</taxon>
        <taxon>Aquificia</taxon>
        <taxon>Aquificales</taxon>
        <taxon>Aquificaceae</taxon>
        <taxon>Aquifex</taxon>
    </lineage>
</organism>
<protein>
    <recommendedName>
        <fullName>tRNA uridine 5-carboxymethylaminomethyl modification enzyme MnmG</fullName>
    </recommendedName>
    <alternativeName>
        <fullName>Glucose-inhibited division protein A</fullName>
    </alternativeName>
</protein>
<feature type="chain" id="PRO_0000117046" description="tRNA uridine 5-carboxymethylaminomethyl modification enzyme MnmG">
    <location>
        <begin position="1"/>
        <end position="617"/>
    </location>
</feature>
<feature type="binding site" evidence="3">
    <location>
        <begin position="14"/>
        <end position="19"/>
    </location>
    <ligand>
        <name>FAD</name>
        <dbReference type="ChEBI" id="CHEBI:57692"/>
    </ligand>
</feature>
<feature type="binding site" evidence="3">
    <location>
        <position position="126"/>
    </location>
    <ligand>
        <name>FAD</name>
        <dbReference type="ChEBI" id="CHEBI:57692"/>
    </ligand>
</feature>
<feature type="binding site" evidence="3">
    <location>
        <position position="181"/>
    </location>
    <ligand>
        <name>FAD</name>
        <dbReference type="ChEBI" id="CHEBI:57692"/>
    </ligand>
</feature>
<feature type="binding site" evidence="2">
    <location>
        <begin position="280"/>
        <end position="294"/>
    </location>
    <ligand>
        <name>NAD(+)</name>
        <dbReference type="ChEBI" id="CHEBI:57540"/>
    </ligand>
</feature>
<feature type="binding site" evidence="3">
    <location>
        <position position="377"/>
    </location>
    <ligand>
        <name>FAD</name>
        <dbReference type="ChEBI" id="CHEBI:57692"/>
    </ligand>
</feature>
<feature type="helix" evidence="6">
    <location>
        <begin position="4"/>
        <end position="6"/>
    </location>
</feature>
<feature type="strand" evidence="6">
    <location>
        <begin position="9"/>
        <end position="13"/>
    </location>
</feature>
<feature type="helix" evidence="6">
    <location>
        <begin position="17"/>
        <end position="28"/>
    </location>
</feature>
<feature type="strand" evidence="6">
    <location>
        <begin position="33"/>
        <end position="38"/>
    </location>
</feature>
<feature type="helix" evidence="6">
    <location>
        <begin position="40"/>
        <end position="42"/>
    </location>
</feature>
<feature type="strand" evidence="6">
    <location>
        <begin position="50"/>
        <end position="53"/>
    </location>
</feature>
<feature type="helix" evidence="6">
    <location>
        <begin position="57"/>
        <end position="67"/>
    </location>
</feature>
<feature type="helix" evidence="6">
    <location>
        <begin position="71"/>
        <end position="78"/>
    </location>
</feature>
<feature type="strand" evidence="6">
    <location>
        <begin position="79"/>
        <end position="86"/>
    </location>
</feature>
<feature type="helix" evidence="6">
    <location>
        <begin position="91"/>
        <end position="93"/>
    </location>
</feature>
<feature type="strand" evidence="6">
    <location>
        <begin position="95"/>
        <end position="100"/>
    </location>
</feature>
<feature type="helix" evidence="6">
    <location>
        <begin position="102"/>
        <end position="114"/>
    </location>
</feature>
<feature type="strand" evidence="6">
    <location>
        <begin position="119"/>
        <end position="124"/>
    </location>
</feature>
<feature type="strand" evidence="6">
    <location>
        <begin position="126"/>
        <end position="141"/>
    </location>
</feature>
<feature type="strand" evidence="6">
    <location>
        <begin position="146"/>
        <end position="148"/>
    </location>
</feature>
<feature type="strand" evidence="6">
    <location>
        <begin position="150"/>
        <end position="154"/>
    </location>
</feature>
<feature type="strand" evidence="6">
    <location>
        <begin position="163"/>
        <end position="166"/>
    </location>
</feature>
<feature type="strand" evidence="6">
    <location>
        <begin position="169"/>
        <end position="172"/>
    </location>
</feature>
<feature type="helix" evidence="6">
    <location>
        <begin position="184"/>
        <end position="190"/>
    </location>
</feature>
<feature type="strand" evidence="6">
    <location>
        <begin position="196"/>
        <end position="202"/>
    </location>
</feature>
<feature type="strand" evidence="6">
    <location>
        <begin position="205"/>
        <end position="207"/>
    </location>
</feature>
<feature type="helix" evidence="6">
    <location>
        <begin position="208"/>
        <end position="210"/>
    </location>
</feature>
<feature type="strand" evidence="6">
    <location>
        <begin position="216"/>
        <end position="219"/>
    </location>
</feature>
<feature type="strand" evidence="6">
    <location>
        <begin position="230"/>
        <end position="234"/>
    </location>
</feature>
<feature type="strand" evidence="6">
    <location>
        <begin position="249"/>
        <end position="253"/>
    </location>
</feature>
<feature type="helix" evidence="6">
    <location>
        <begin position="256"/>
        <end position="264"/>
    </location>
</feature>
<feature type="helix" evidence="5">
    <location>
        <begin position="265"/>
        <end position="268"/>
    </location>
</feature>
<feature type="turn" evidence="5">
    <location>
        <begin position="281"/>
        <end position="283"/>
    </location>
</feature>
<feature type="helix" evidence="6">
    <location>
        <begin position="287"/>
        <end position="293"/>
    </location>
</feature>
<feature type="strand" evidence="6">
    <location>
        <begin position="301"/>
        <end position="306"/>
    </location>
</feature>
<feature type="strand" evidence="6">
    <location>
        <begin position="313"/>
        <end position="317"/>
    </location>
</feature>
<feature type="helix" evidence="6">
    <location>
        <begin position="325"/>
        <end position="332"/>
    </location>
</feature>
<feature type="strand" evidence="6">
    <location>
        <begin position="343"/>
        <end position="345"/>
    </location>
</feature>
<feature type="strand" evidence="6">
    <location>
        <begin position="348"/>
        <end position="354"/>
    </location>
</feature>
<feature type="helix" evidence="6">
    <location>
        <begin position="357"/>
        <end position="359"/>
    </location>
</feature>
<feature type="strand" evidence="6">
    <location>
        <begin position="364"/>
        <end position="370"/>
    </location>
</feature>
<feature type="strand" evidence="6">
    <location>
        <begin position="372"/>
        <end position="374"/>
    </location>
</feature>
<feature type="helix" evidence="6">
    <location>
        <begin position="376"/>
        <end position="379"/>
    </location>
</feature>
<feature type="helix" evidence="6">
    <location>
        <begin position="384"/>
        <end position="402"/>
    </location>
</feature>
<feature type="turn" evidence="6">
    <location>
        <begin position="412"/>
        <end position="414"/>
    </location>
</feature>
<feature type="helix" evidence="6">
    <location>
        <begin position="416"/>
        <end position="427"/>
    </location>
</feature>
<feature type="helix" evidence="6">
    <location>
        <begin position="435"/>
        <end position="437"/>
    </location>
</feature>
<feature type="turn" evidence="6">
    <location>
        <begin position="441"/>
        <end position="445"/>
    </location>
</feature>
<feature type="helix" evidence="6">
    <location>
        <begin position="451"/>
        <end position="461"/>
    </location>
</feature>
<feature type="strand" evidence="5">
    <location>
        <begin position="463"/>
        <end position="465"/>
    </location>
</feature>
<feature type="helix" evidence="6">
    <location>
        <begin position="467"/>
        <end position="487"/>
    </location>
</feature>
<feature type="strand" evidence="6">
    <location>
        <begin position="491"/>
        <end position="496"/>
    </location>
</feature>
<feature type="strand" evidence="6">
    <location>
        <begin position="499"/>
        <end position="504"/>
    </location>
</feature>
<feature type="helix" evidence="6">
    <location>
        <begin position="505"/>
        <end position="508"/>
    </location>
</feature>
<feature type="turn" evidence="6">
    <location>
        <begin position="509"/>
        <end position="512"/>
    </location>
</feature>
<feature type="helix" evidence="6">
    <location>
        <begin position="515"/>
        <end position="522"/>
    </location>
</feature>
<feature type="helix" evidence="6">
    <location>
        <begin position="530"/>
        <end position="552"/>
    </location>
</feature>
<feature type="helix" evidence="6">
    <location>
        <begin position="554"/>
        <end position="560"/>
    </location>
</feature>
<feature type="helix" evidence="6">
    <location>
        <begin position="570"/>
        <end position="572"/>
    </location>
</feature>
<feature type="helix" evidence="6">
    <location>
        <begin position="578"/>
        <end position="587"/>
    </location>
</feature>
<feature type="helix" evidence="6">
    <location>
        <begin position="592"/>
        <end position="595"/>
    </location>
</feature>
<feature type="helix" evidence="6">
    <location>
        <begin position="603"/>
        <end position="612"/>
    </location>
</feature>
<sequence>MAWVVDEFDVVVIGGGHAGIEAALAAARMGAKTAMFVLNADTIGQMSCNPAIGGIAKGIVVREIDALGGEMGKAIDQTGIQFKMLNTRKGKAVQSPRAQADKKRYREYMKKVCENQENLYIKQEEVVDIIVKNNQVVGVRTNLGVEYKTKAVVVTTGTFLNGVIYIGDKMIPGGRLGEPRSEGLSDFYRRFDFPLIRFKTGTPARLDKRTIDFSALEVAPGDDPPPKFSFWTEPVGSYWFPKGKEQVNCWITYTTPKTHEIIRKNLHRTALYGGLIKGIGPRYCPSIEDKIVKFPDKERHQIFLEPEGLDTIEIYPNGLSTSLPEEVQWEMYRSIPGLENVVLIRPAYAIEYDVVPPTELYPTLETKKIRGLFHAGNFNGTTGYEEAAGQGIVAGINAALRAFGKEPIYLRRDESYIGVMIDDLTTKGVTEPYRLFTSRSEYRLYIRQDNAILRLAKLGRELGLLSEEQYKLVKELEREIEKWKEFYKSERVSVAVGGDTRSYSVATLMTMNYTLDDVKEKFGYEVPQHPYVKEEVEIQLKYEPYIERERKLNEKLKKLEDTKIPPDIDYDKIPGLTKEAREKLKKFKPITVGQASRIDGITPAAITALLVYLGKLD</sequence>
<accession>O66962</accession>
<dbReference type="EMBL" id="AE000657">
    <property type="protein sequence ID" value="AAC06917.1"/>
    <property type="molecule type" value="Genomic_DNA"/>
</dbReference>
<dbReference type="PIR" id="G70366">
    <property type="entry name" value="G70366"/>
</dbReference>
<dbReference type="RefSeq" id="NP_213523.1">
    <property type="nucleotide sequence ID" value="NC_000918.1"/>
</dbReference>
<dbReference type="RefSeq" id="WP_010880461.1">
    <property type="nucleotide sequence ID" value="NC_000918.1"/>
</dbReference>
<dbReference type="PDB" id="2ZXH">
    <property type="method" value="X-ray"/>
    <property type="resolution" value="3.20 A"/>
    <property type="chains" value="A/B=1-617"/>
</dbReference>
<dbReference type="PDB" id="2ZXI">
    <property type="method" value="X-ray"/>
    <property type="resolution" value="2.30 A"/>
    <property type="chains" value="A/B/C/D=1-617"/>
</dbReference>
<dbReference type="PDBsum" id="2ZXH"/>
<dbReference type="PDBsum" id="2ZXI"/>
<dbReference type="SMR" id="O66962"/>
<dbReference type="DIP" id="DIP-48311N"/>
<dbReference type="FunCoup" id="O66962">
    <property type="interactions" value="474"/>
</dbReference>
<dbReference type="STRING" id="224324.aq_761"/>
<dbReference type="EnsemblBacteria" id="AAC06917">
    <property type="protein sequence ID" value="AAC06917"/>
    <property type="gene ID" value="aq_761"/>
</dbReference>
<dbReference type="KEGG" id="aae:aq_761"/>
<dbReference type="PATRIC" id="fig|224324.8.peg.606"/>
<dbReference type="eggNOG" id="COG0445">
    <property type="taxonomic scope" value="Bacteria"/>
</dbReference>
<dbReference type="HOGENOM" id="CLU_007831_2_2_0"/>
<dbReference type="InParanoid" id="O66962"/>
<dbReference type="OrthoDB" id="9815560at2"/>
<dbReference type="EvolutionaryTrace" id="O66962"/>
<dbReference type="Proteomes" id="UP000000798">
    <property type="component" value="Chromosome"/>
</dbReference>
<dbReference type="GO" id="GO:0005829">
    <property type="term" value="C:cytosol"/>
    <property type="evidence" value="ECO:0000318"/>
    <property type="project" value="GO_Central"/>
</dbReference>
<dbReference type="GO" id="GO:0050660">
    <property type="term" value="F:flavin adenine dinucleotide binding"/>
    <property type="evidence" value="ECO:0000318"/>
    <property type="project" value="GO_Central"/>
</dbReference>
<dbReference type="GO" id="GO:0030488">
    <property type="term" value="P:tRNA methylation"/>
    <property type="evidence" value="ECO:0000318"/>
    <property type="project" value="GO_Central"/>
</dbReference>
<dbReference type="GO" id="GO:0002098">
    <property type="term" value="P:tRNA wobble uridine modification"/>
    <property type="evidence" value="ECO:0000318"/>
    <property type="project" value="GO_Central"/>
</dbReference>
<dbReference type="FunFam" id="1.10.150.570:FF:000001">
    <property type="entry name" value="tRNA uridine 5-carboxymethylaminomethyl modification enzyme MnmG"/>
    <property type="match status" value="1"/>
</dbReference>
<dbReference type="FunFam" id="3.50.50.60:FF:000002">
    <property type="entry name" value="tRNA uridine 5-carboxymethylaminomethyl modification enzyme MnmG"/>
    <property type="match status" value="1"/>
</dbReference>
<dbReference type="Gene3D" id="3.50.50.60">
    <property type="entry name" value="FAD/NAD(P)-binding domain"/>
    <property type="match status" value="2"/>
</dbReference>
<dbReference type="Gene3D" id="1.10.150.570">
    <property type="entry name" value="GidA associated domain, C-terminal subdomain"/>
    <property type="match status" value="1"/>
</dbReference>
<dbReference type="Gene3D" id="1.10.10.1800">
    <property type="entry name" value="tRNA uridine 5-carboxymethylaminomethyl modification enzyme MnmG/GidA"/>
    <property type="match status" value="1"/>
</dbReference>
<dbReference type="HAMAP" id="MF_00129">
    <property type="entry name" value="MnmG_GidA"/>
    <property type="match status" value="1"/>
</dbReference>
<dbReference type="InterPro" id="IPR036188">
    <property type="entry name" value="FAD/NAD-bd_sf"/>
</dbReference>
<dbReference type="InterPro" id="IPR049312">
    <property type="entry name" value="GIDA_C_N"/>
</dbReference>
<dbReference type="InterPro" id="IPR004416">
    <property type="entry name" value="MnmG"/>
</dbReference>
<dbReference type="InterPro" id="IPR002218">
    <property type="entry name" value="MnmG-rel"/>
</dbReference>
<dbReference type="InterPro" id="IPR020595">
    <property type="entry name" value="MnmG-rel_CS"/>
</dbReference>
<dbReference type="InterPro" id="IPR026904">
    <property type="entry name" value="MnmG_C"/>
</dbReference>
<dbReference type="InterPro" id="IPR047001">
    <property type="entry name" value="MnmG_C_subdom"/>
</dbReference>
<dbReference type="InterPro" id="IPR044920">
    <property type="entry name" value="MnmG_C_subdom_sf"/>
</dbReference>
<dbReference type="InterPro" id="IPR040131">
    <property type="entry name" value="MnmG_N"/>
</dbReference>
<dbReference type="NCBIfam" id="TIGR00136">
    <property type="entry name" value="mnmG_gidA"/>
    <property type="match status" value="1"/>
</dbReference>
<dbReference type="PANTHER" id="PTHR11806">
    <property type="entry name" value="GLUCOSE INHIBITED DIVISION PROTEIN A"/>
    <property type="match status" value="1"/>
</dbReference>
<dbReference type="PANTHER" id="PTHR11806:SF0">
    <property type="entry name" value="PROTEIN MTO1 HOMOLOG, MITOCHONDRIAL"/>
    <property type="match status" value="1"/>
</dbReference>
<dbReference type="Pfam" id="PF01134">
    <property type="entry name" value="GIDA"/>
    <property type="match status" value="1"/>
</dbReference>
<dbReference type="Pfam" id="PF21680">
    <property type="entry name" value="GIDA_C_1st"/>
    <property type="match status" value="1"/>
</dbReference>
<dbReference type="Pfam" id="PF13932">
    <property type="entry name" value="SAM_GIDA_C"/>
    <property type="match status" value="1"/>
</dbReference>
<dbReference type="PRINTS" id="PR00368">
    <property type="entry name" value="FADPNR"/>
</dbReference>
<dbReference type="PRINTS" id="PR00411">
    <property type="entry name" value="PNDRDTASEI"/>
</dbReference>
<dbReference type="SMART" id="SM01228">
    <property type="entry name" value="GIDA_assoc_3"/>
    <property type="match status" value="1"/>
</dbReference>
<dbReference type="SUPFAM" id="SSF51905">
    <property type="entry name" value="FAD/NAD(P)-binding domain"/>
    <property type="match status" value="1"/>
</dbReference>
<dbReference type="PROSITE" id="PS01280">
    <property type="entry name" value="GIDA_1"/>
    <property type="match status" value="1"/>
</dbReference>
<dbReference type="PROSITE" id="PS01281">
    <property type="entry name" value="GIDA_2"/>
    <property type="match status" value="1"/>
</dbReference>
<gene>
    <name type="primary">mnmG</name>
    <name type="synonym">gidA</name>
    <name type="ordered locus">aq_761</name>
</gene>
<keyword id="KW-0002">3D-structure</keyword>
<keyword id="KW-0963">Cytoplasm</keyword>
<keyword id="KW-0274">FAD</keyword>
<keyword id="KW-0285">Flavoprotein</keyword>
<keyword id="KW-0520">NAD</keyword>
<keyword id="KW-1185">Reference proteome</keyword>
<keyword id="KW-0819">tRNA processing</keyword>